<reference key="1">
    <citation type="submission" date="2008-10" db="EMBL/GenBank/DDBJ databases">
        <title>Genome sequence of Bacillus cereus AH820.</title>
        <authorList>
            <person name="Dodson R.J."/>
            <person name="Durkin A.S."/>
            <person name="Rosovitz M.J."/>
            <person name="Rasko D.A."/>
            <person name="Hoffmaster A."/>
            <person name="Ravel J."/>
            <person name="Sutton G."/>
        </authorList>
    </citation>
    <scope>NUCLEOTIDE SEQUENCE [LARGE SCALE GENOMIC DNA]</scope>
    <source>
        <strain>AH820</strain>
    </source>
</reference>
<name>RL21_BACC0</name>
<gene>
    <name evidence="1" type="primary">rplU</name>
    <name type="ordered locus">BCAH820_4524</name>
</gene>
<proteinExistence type="inferred from homology"/>
<comment type="function">
    <text evidence="1">This protein binds to 23S rRNA in the presence of protein L20.</text>
</comment>
<comment type="subunit">
    <text evidence="1">Part of the 50S ribosomal subunit. Contacts protein L20.</text>
</comment>
<comment type="similarity">
    <text evidence="1">Belongs to the bacterial ribosomal protein bL21 family.</text>
</comment>
<evidence type="ECO:0000255" key="1">
    <source>
        <dbReference type="HAMAP-Rule" id="MF_01363"/>
    </source>
</evidence>
<evidence type="ECO:0000305" key="2"/>
<dbReference type="EMBL" id="CP001283">
    <property type="protein sequence ID" value="ACK91990.1"/>
    <property type="molecule type" value="Genomic_DNA"/>
</dbReference>
<dbReference type="RefSeq" id="WP_000270907.1">
    <property type="nucleotide sequence ID" value="NC_011773.1"/>
</dbReference>
<dbReference type="SMR" id="B7JQ30"/>
<dbReference type="GeneID" id="93006656"/>
<dbReference type="KEGG" id="bcu:BCAH820_4524"/>
<dbReference type="HOGENOM" id="CLU_061463_3_2_9"/>
<dbReference type="Proteomes" id="UP000001363">
    <property type="component" value="Chromosome"/>
</dbReference>
<dbReference type="GO" id="GO:0005737">
    <property type="term" value="C:cytoplasm"/>
    <property type="evidence" value="ECO:0007669"/>
    <property type="project" value="UniProtKB-ARBA"/>
</dbReference>
<dbReference type="GO" id="GO:1990904">
    <property type="term" value="C:ribonucleoprotein complex"/>
    <property type="evidence" value="ECO:0007669"/>
    <property type="project" value="UniProtKB-KW"/>
</dbReference>
<dbReference type="GO" id="GO:0005840">
    <property type="term" value="C:ribosome"/>
    <property type="evidence" value="ECO:0007669"/>
    <property type="project" value="UniProtKB-KW"/>
</dbReference>
<dbReference type="GO" id="GO:0019843">
    <property type="term" value="F:rRNA binding"/>
    <property type="evidence" value="ECO:0007669"/>
    <property type="project" value="UniProtKB-UniRule"/>
</dbReference>
<dbReference type="GO" id="GO:0003735">
    <property type="term" value="F:structural constituent of ribosome"/>
    <property type="evidence" value="ECO:0007669"/>
    <property type="project" value="InterPro"/>
</dbReference>
<dbReference type="GO" id="GO:0006412">
    <property type="term" value="P:translation"/>
    <property type="evidence" value="ECO:0007669"/>
    <property type="project" value="UniProtKB-UniRule"/>
</dbReference>
<dbReference type="HAMAP" id="MF_01363">
    <property type="entry name" value="Ribosomal_bL21"/>
    <property type="match status" value="1"/>
</dbReference>
<dbReference type="InterPro" id="IPR028909">
    <property type="entry name" value="bL21-like"/>
</dbReference>
<dbReference type="InterPro" id="IPR036164">
    <property type="entry name" value="bL21-like_sf"/>
</dbReference>
<dbReference type="InterPro" id="IPR001787">
    <property type="entry name" value="Ribosomal_bL21"/>
</dbReference>
<dbReference type="InterPro" id="IPR018258">
    <property type="entry name" value="Ribosomal_bL21_CS"/>
</dbReference>
<dbReference type="NCBIfam" id="TIGR00061">
    <property type="entry name" value="L21"/>
    <property type="match status" value="1"/>
</dbReference>
<dbReference type="PANTHER" id="PTHR21349">
    <property type="entry name" value="50S RIBOSOMAL PROTEIN L21"/>
    <property type="match status" value="1"/>
</dbReference>
<dbReference type="PANTHER" id="PTHR21349:SF0">
    <property type="entry name" value="LARGE RIBOSOMAL SUBUNIT PROTEIN BL21M"/>
    <property type="match status" value="1"/>
</dbReference>
<dbReference type="Pfam" id="PF00829">
    <property type="entry name" value="Ribosomal_L21p"/>
    <property type="match status" value="1"/>
</dbReference>
<dbReference type="SUPFAM" id="SSF141091">
    <property type="entry name" value="L21p-like"/>
    <property type="match status" value="1"/>
</dbReference>
<dbReference type="PROSITE" id="PS01169">
    <property type="entry name" value="RIBOSOMAL_L21"/>
    <property type="match status" value="1"/>
</dbReference>
<keyword id="KW-0687">Ribonucleoprotein</keyword>
<keyword id="KW-0689">Ribosomal protein</keyword>
<keyword id="KW-0694">RNA-binding</keyword>
<keyword id="KW-0699">rRNA-binding</keyword>
<accession>B7JQ30</accession>
<protein>
    <recommendedName>
        <fullName evidence="1">Large ribosomal subunit protein bL21</fullName>
    </recommendedName>
    <alternativeName>
        <fullName evidence="2">50S ribosomal protein L21</fullName>
    </alternativeName>
</protein>
<organism>
    <name type="scientific">Bacillus cereus (strain AH820)</name>
    <dbReference type="NCBI Taxonomy" id="405535"/>
    <lineage>
        <taxon>Bacteria</taxon>
        <taxon>Bacillati</taxon>
        <taxon>Bacillota</taxon>
        <taxon>Bacilli</taxon>
        <taxon>Bacillales</taxon>
        <taxon>Bacillaceae</taxon>
        <taxon>Bacillus</taxon>
        <taxon>Bacillus cereus group</taxon>
    </lineage>
</organism>
<sequence>MYAIIETGGKQIKVEAGQAIYIEKLDVEAGETVTFDKVLFVGGENVKVGSPVVEGATVTAKVEKQGRAKKIIVFKYKAKKNNRKKQGHRQPYTKLVVEAINA</sequence>
<feature type="chain" id="PRO_1000143753" description="Large ribosomal subunit protein bL21">
    <location>
        <begin position="1"/>
        <end position="102"/>
    </location>
</feature>